<name>FLII_CAUVC</name>
<evidence type="ECO:0000250" key="1"/>
<evidence type="ECO:0000255" key="2"/>
<evidence type="ECO:0000255" key="3">
    <source>
        <dbReference type="PROSITE-ProRule" id="PRU10106"/>
    </source>
</evidence>
<evidence type="ECO:0000305" key="4"/>
<proteinExistence type="inferred from homology"/>
<feature type="chain" id="PRO_0000144693" description="Flagellum-specific ATP synthase">
    <location>
        <begin position="1"/>
        <end position="444"/>
    </location>
</feature>
<feature type="binding site" evidence="2">
    <location>
        <begin position="164"/>
        <end position="171"/>
    </location>
    <ligand>
        <name>ATP</name>
        <dbReference type="ChEBI" id="CHEBI:30616"/>
    </ligand>
</feature>
<comment type="function">
    <text evidence="1">Probable catalytic subunit of a protein translocase for flagellum-specific export, or a proton translocase involved in local circuits at the flagellum.</text>
</comment>
<comment type="catalytic activity">
    <reaction evidence="3">
        <text>ATP + H2O + 4 H(+)(in) = ADP + phosphate + 5 H(+)(out)</text>
        <dbReference type="Rhea" id="RHEA:57720"/>
        <dbReference type="ChEBI" id="CHEBI:15377"/>
        <dbReference type="ChEBI" id="CHEBI:15378"/>
        <dbReference type="ChEBI" id="CHEBI:30616"/>
        <dbReference type="ChEBI" id="CHEBI:43474"/>
        <dbReference type="ChEBI" id="CHEBI:456216"/>
        <dbReference type="EC" id="7.1.2.2"/>
    </reaction>
</comment>
<comment type="subcellular location">
    <subcellularLocation>
        <location evidence="4">Cytoplasm</location>
    </subcellularLocation>
</comment>
<comment type="similarity">
    <text evidence="4">Belongs to the ATPase alpha/beta chains family.</text>
</comment>
<reference key="1">
    <citation type="journal article" date="2001" name="Proc. Natl. Acad. Sci. U.S.A.">
        <title>Complete genome sequence of Caulobacter crescentus.</title>
        <authorList>
            <person name="Nierman W.C."/>
            <person name="Feldblyum T.V."/>
            <person name="Laub M.T."/>
            <person name="Paulsen I.T."/>
            <person name="Nelson K.E."/>
            <person name="Eisen J.A."/>
            <person name="Heidelberg J.F."/>
            <person name="Alley M.R.K."/>
            <person name="Ohta N."/>
            <person name="Maddock J.R."/>
            <person name="Potocka I."/>
            <person name="Nelson W.C."/>
            <person name="Newton A."/>
            <person name="Stephens C."/>
            <person name="Phadke N.D."/>
            <person name="Ely B."/>
            <person name="DeBoy R.T."/>
            <person name="Dodson R.J."/>
            <person name="Durkin A.S."/>
            <person name="Gwinn M.L."/>
            <person name="Haft D.H."/>
            <person name="Kolonay J.F."/>
            <person name="Smit J."/>
            <person name="Craven M.B."/>
            <person name="Khouri H.M."/>
            <person name="Shetty J."/>
            <person name="Berry K.J."/>
            <person name="Utterback T.R."/>
            <person name="Tran K."/>
            <person name="Wolf A.M."/>
            <person name="Vamathevan J.J."/>
            <person name="Ermolaeva M.D."/>
            <person name="White O."/>
            <person name="Salzberg S.L."/>
            <person name="Venter J.C."/>
            <person name="Shapiro L."/>
            <person name="Fraser C.M."/>
        </authorList>
    </citation>
    <scope>NUCLEOTIDE SEQUENCE [LARGE SCALE GENOMIC DNA]</scope>
    <source>
        <strain>ATCC 19089 / CIP 103742 / CB 15</strain>
    </source>
</reference>
<accession>P0CAT8</accession>
<accession>O05528</accession>
<dbReference type="EC" id="7.1.2.2"/>
<dbReference type="EMBL" id="AE005673">
    <property type="protein sequence ID" value="AAK25002.1"/>
    <property type="molecule type" value="Genomic_DNA"/>
</dbReference>
<dbReference type="PIR" id="F87625">
    <property type="entry name" value="F87625"/>
</dbReference>
<dbReference type="RefSeq" id="NP_421834.1">
    <property type="nucleotide sequence ID" value="NC_002696.2"/>
</dbReference>
<dbReference type="RefSeq" id="WP_010920876.1">
    <property type="nucleotide sequence ID" value="NC_002696.2"/>
</dbReference>
<dbReference type="SMR" id="P0CAT8"/>
<dbReference type="STRING" id="190650.CC_3040"/>
<dbReference type="EnsemblBacteria" id="AAK25002">
    <property type="protein sequence ID" value="AAK25002"/>
    <property type="gene ID" value="CC_3040"/>
</dbReference>
<dbReference type="KEGG" id="ccr:CC_3040"/>
<dbReference type="PATRIC" id="fig|190650.5.peg.3044"/>
<dbReference type="eggNOG" id="COG1157">
    <property type="taxonomic scope" value="Bacteria"/>
</dbReference>
<dbReference type="HOGENOM" id="CLU_022398_5_1_5"/>
<dbReference type="BioCyc" id="CAULO:CC3040-MONOMER"/>
<dbReference type="Proteomes" id="UP000001816">
    <property type="component" value="Chromosome"/>
</dbReference>
<dbReference type="GO" id="GO:0009288">
    <property type="term" value="C:bacterial-type flagellum"/>
    <property type="evidence" value="ECO:0007669"/>
    <property type="project" value="InterPro"/>
</dbReference>
<dbReference type="GO" id="GO:0005737">
    <property type="term" value="C:cytoplasm"/>
    <property type="evidence" value="ECO:0007669"/>
    <property type="project" value="UniProtKB-SubCell"/>
</dbReference>
<dbReference type="GO" id="GO:0030257">
    <property type="term" value="C:type III protein secretion system complex"/>
    <property type="evidence" value="ECO:0007669"/>
    <property type="project" value="InterPro"/>
</dbReference>
<dbReference type="GO" id="GO:0005524">
    <property type="term" value="F:ATP binding"/>
    <property type="evidence" value="ECO:0007669"/>
    <property type="project" value="UniProtKB-KW"/>
</dbReference>
<dbReference type="GO" id="GO:0016887">
    <property type="term" value="F:ATP hydrolysis activity"/>
    <property type="evidence" value="ECO:0007669"/>
    <property type="project" value="InterPro"/>
</dbReference>
<dbReference type="GO" id="GO:0046933">
    <property type="term" value="F:proton-transporting ATP synthase activity, rotational mechanism"/>
    <property type="evidence" value="ECO:0007669"/>
    <property type="project" value="TreeGrafter"/>
</dbReference>
<dbReference type="GO" id="GO:0044781">
    <property type="term" value="P:bacterial-type flagellum organization"/>
    <property type="evidence" value="ECO:0007669"/>
    <property type="project" value="UniProtKB-KW"/>
</dbReference>
<dbReference type="GO" id="GO:0030254">
    <property type="term" value="P:protein secretion by the type III secretion system"/>
    <property type="evidence" value="ECO:0007669"/>
    <property type="project" value="InterPro"/>
</dbReference>
<dbReference type="CDD" id="cd18114">
    <property type="entry name" value="ATP-synt_flagellum-secretory_path_III_C"/>
    <property type="match status" value="1"/>
</dbReference>
<dbReference type="CDD" id="cd18117">
    <property type="entry name" value="ATP-synt_flagellum-secretory_path_III_N"/>
    <property type="match status" value="1"/>
</dbReference>
<dbReference type="CDD" id="cd01136">
    <property type="entry name" value="ATPase_flagellum-secretory_path_III"/>
    <property type="match status" value="1"/>
</dbReference>
<dbReference type="FunFam" id="3.40.50.12240:FF:000002">
    <property type="entry name" value="Flagellum-specific ATP synthase FliI"/>
    <property type="match status" value="1"/>
</dbReference>
<dbReference type="Gene3D" id="3.40.50.12240">
    <property type="match status" value="1"/>
</dbReference>
<dbReference type="InterPro" id="IPR003593">
    <property type="entry name" value="AAA+_ATPase"/>
</dbReference>
<dbReference type="InterPro" id="IPR020003">
    <property type="entry name" value="ATPase_a/bsu_AS"/>
</dbReference>
<dbReference type="InterPro" id="IPR050053">
    <property type="entry name" value="ATPase_alpha/beta_chains"/>
</dbReference>
<dbReference type="InterPro" id="IPR004100">
    <property type="entry name" value="ATPase_F1/V1/A1_a/bsu_N"/>
</dbReference>
<dbReference type="InterPro" id="IPR000194">
    <property type="entry name" value="ATPase_F1/V1/A1_a/bsu_nucl-bd"/>
</dbReference>
<dbReference type="InterPro" id="IPR005714">
    <property type="entry name" value="ATPase_T3SS_FliI/YscN"/>
</dbReference>
<dbReference type="InterPro" id="IPR022426">
    <property type="entry name" value="FliI_clade3"/>
</dbReference>
<dbReference type="InterPro" id="IPR027417">
    <property type="entry name" value="P-loop_NTPase"/>
</dbReference>
<dbReference type="InterPro" id="IPR040627">
    <property type="entry name" value="T3SS_ATPase_C"/>
</dbReference>
<dbReference type="NCBIfam" id="TIGR03498">
    <property type="entry name" value="FliI_clade3"/>
    <property type="match status" value="1"/>
</dbReference>
<dbReference type="NCBIfam" id="TIGR01026">
    <property type="entry name" value="fliI_yscN"/>
    <property type="match status" value="1"/>
</dbReference>
<dbReference type="PANTHER" id="PTHR15184">
    <property type="entry name" value="ATP SYNTHASE"/>
    <property type="match status" value="1"/>
</dbReference>
<dbReference type="PANTHER" id="PTHR15184:SF9">
    <property type="entry name" value="SPI-1 TYPE 3 SECRETION SYSTEM ATPASE"/>
    <property type="match status" value="1"/>
</dbReference>
<dbReference type="Pfam" id="PF00006">
    <property type="entry name" value="ATP-synt_ab"/>
    <property type="match status" value="1"/>
</dbReference>
<dbReference type="Pfam" id="PF02874">
    <property type="entry name" value="ATP-synt_ab_N"/>
    <property type="match status" value="1"/>
</dbReference>
<dbReference type="Pfam" id="PF18269">
    <property type="entry name" value="T3SS_ATPase_C"/>
    <property type="match status" value="1"/>
</dbReference>
<dbReference type="SMART" id="SM00382">
    <property type="entry name" value="AAA"/>
    <property type="match status" value="1"/>
</dbReference>
<dbReference type="SUPFAM" id="SSF52540">
    <property type="entry name" value="P-loop containing nucleoside triphosphate hydrolases"/>
    <property type="match status" value="1"/>
</dbReference>
<dbReference type="PROSITE" id="PS00152">
    <property type="entry name" value="ATPASE_ALPHA_BETA"/>
    <property type="match status" value="1"/>
</dbReference>
<organism>
    <name type="scientific">Caulobacter vibrioides (strain ATCC 19089 / CIP 103742 / CB 15)</name>
    <name type="common">Caulobacter crescentus</name>
    <dbReference type="NCBI Taxonomy" id="190650"/>
    <lineage>
        <taxon>Bacteria</taxon>
        <taxon>Pseudomonadati</taxon>
        <taxon>Pseudomonadota</taxon>
        <taxon>Alphaproteobacteria</taxon>
        <taxon>Caulobacterales</taxon>
        <taxon>Caulobacteraceae</taxon>
        <taxon>Caulobacter</taxon>
    </lineage>
</organism>
<sequence length="444" mass="47896">MRSLIAAVERIDPLTIYGRVAAVNGLLIEVRGGLTRLAVGARVEIERFGQKPLPAEVVGFRETRALLMPFGPVEGVGPGAEIRIVPEGAVVRPTKAWLGRIINAFGEPIDGLGPLPQGEVPYPLKTPPPPAHARGRVGERLDLGVRSMNVFTTTCRGQRLGIFAGSGVGKSVLLSMLAKEATCDAVVVGLIGERGREVREFVEETLGEEGLRRAVVVVATSDEPALTRRQAAYMTLAISEFMRDQDQEVLCLMDSVTRFAMAQREIGLAAGEPPTTKGYTPTVFTELPKLLERAGPGPIRPDGTTAAPITALFTVLVDGDDHNEPIADATRGILDGHIVMERAIAERGRFPAINVLKSISRTMPGCQHPHERDIVKGARQVMSAYSNMEELIRIGAYRAGADPVVDRAIRLNPAIEAFLSQDKEEATSLDDSFGMLGQILQSEY</sequence>
<protein>
    <recommendedName>
        <fullName>Flagellum-specific ATP synthase</fullName>
        <ecNumber>7.1.2.2</ecNumber>
    </recommendedName>
</protein>
<gene>
    <name type="primary">fliI</name>
    <name type="ordered locus">CC_3040</name>
</gene>
<keyword id="KW-0066">ATP synthesis</keyword>
<keyword id="KW-0067">ATP-binding</keyword>
<keyword id="KW-1005">Bacterial flagellum biogenesis</keyword>
<keyword id="KW-1006">Bacterial flagellum protein export</keyword>
<keyword id="KW-0963">Cytoplasm</keyword>
<keyword id="KW-0375">Hydrogen ion transport</keyword>
<keyword id="KW-0406">Ion transport</keyword>
<keyword id="KW-0547">Nucleotide-binding</keyword>
<keyword id="KW-0653">Protein transport</keyword>
<keyword id="KW-1185">Reference proteome</keyword>
<keyword id="KW-1278">Translocase</keyword>
<keyword id="KW-0813">Transport</keyword>